<keyword id="KW-0012">Acyltransferase</keyword>
<keyword id="KW-0963">Cytoplasm</keyword>
<keyword id="KW-1185">Reference proteome</keyword>
<keyword id="KW-0808">Transferase</keyword>
<feature type="chain" id="PRO_0000263224" description="Aspartate/glutamate leucyltransferase">
    <location>
        <begin position="1"/>
        <end position="251"/>
    </location>
</feature>
<accession>Q5H2F6</accession>
<reference key="1">
    <citation type="journal article" date="2005" name="Nucleic Acids Res.">
        <title>The genome sequence of Xanthomonas oryzae pathovar oryzae KACC10331, the bacterial blight pathogen of rice.</title>
        <authorList>
            <person name="Lee B.-M."/>
            <person name="Park Y.-J."/>
            <person name="Park D.-S."/>
            <person name="Kang H.-W."/>
            <person name="Kim J.-G."/>
            <person name="Song E.-S."/>
            <person name="Park I.-C."/>
            <person name="Yoon U.-H."/>
            <person name="Hahn J.-H."/>
            <person name="Koo B.-S."/>
            <person name="Lee G.-B."/>
            <person name="Kim H."/>
            <person name="Park H.-S."/>
            <person name="Yoon K.-O."/>
            <person name="Kim J.-H."/>
            <person name="Jung C.-H."/>
            <person name="Koh N.-H."/>
            <person name="Seo J.-S."/>
            <person name="Go S.-J."/>
        </authorList>
    </citation>
    <scope>NUCLEOTIDE SEQUENCE [LARGE SCALE GENOMIC DNA]</scope>
    <source>
        <strain>KACC10331 / KXO85</strain>
    </source>
</reference>
<comment type="function">
    <text evidence="1">Functions in the N-end rule pathway of protein degradation where it conjugates Leu from its aminoacyl-tRNA to the N-termini of proteins containing an N-terminal aspartate or glutamate.</text>
</comment>
<comment type="catalytic activity">
    <reaction evidence="1">
        <text>N-terminal L-glutamyl-[protein] + L-leucyl-tRNA(Leu) = N-terminal L-leucyl-L-glutamyl-[protein] + tRNA(Leu) + H(+)</text>
        <dbReference type="Rhea" id="RHEA:50412"/>
        <dbReference type="Rhea" id="RHEA-COMP:9613"/>
        <dbReference type="Rhea" id="RHEA-COMP:9622"/>
        <dbReference type="Rhea" id="RHEA-COMP:12664"/>
        <dbReference type="Rhea" id="RHEA-COMP:12668"/>
        <dbReference type="ChEBI" id="CHEBI:15378"/>
        <dbReference type="ChEBI" id="CHEBI:64721"/>
        <dbReference type="ChEBI" id="CHEBI:78442"/>
        <dbReference type="ChEBI" id="CHEBI:78494"/>
        <dbReference type="ChEBI" id="CHEBI:133041"/>
        <dbReference type="EC" id="2.3.2.29"/>
    </reaction>
</comment>
<comment type="catalytic activity">
    <reaction evidence="1">
        <text>N-terminal L-aspartyl-[protein] + L-leucyl-tRNA(Leu) = N-terminal L-leucyl-L-aspartyl-[protein] + tRNA(Leu) + H(+)</text>
        <dbReference type="Rhea" id="RHEA:50420"/>
        <dbReference type="Rhea" id="RHEA-COMP:9613"/>
        <dbReference type="Rhea" id="RHEA-COMP:9622"/>
        <dbReference type="Rhea" id="RHEA-COMP:12669"/>
        <dbReference type="Rhea" id="RHEA-COMP:12674"/>
        <dbReference type="ChEBI" id="CHEBI:15378"/>
        <dbReference type="ChEBI" id="CHEBI:64720"/>
        <dbReference type="ChEBI" id="CHEBI:78442"/>
        <dbReference type="ChEBI" id="CHEBI:78494"/>
        <dbReference type="ChEBI" id="CHEBI:133042"/>
        <dbReference type="EC" id="2.3.2.29"/>
    </reaction>
</comment>
<comment type="subcellular location">
    <subcellularLocation>
        <location evidence="1">Cytoplasm</location>
    </subcellularLocation>
</comment>
<comment type="similarity">
    <text evidence="1">Belongs to the R-transferase family. Bpt subfamily.</text>
</comment>
<comment type="sequence caution" evidence="2">
    <conflict type="erroneous initiation">
        <sequence resource="EMBL-CDS" id="AAW74865"/>
    </conflict>
</comment>
<proteinExistence type="inferred from homology"/>
<organism>
    <name type="scientific">Xanthomonas oryzae pv. oryzae (strain KACC10331 / KXO85)</name>
    <dbReference type="NCBI Taxonomy" id="291331"/>
    <lineage>
        <taxon>Bacteria</taxon>
        <taxon>Pseudomonadati</taxon>
        <taxon>Pseudomonadota</taxon>
        <taxon>Gammaproteobacteria</taxon>
        <taxon>Lysobacterales</taxon>
        <taxon>Lysobacteraceae</taxon>
        <taxon>Xanthomonas</taxon>
    </lineage>
</organism>
<name>BPT_XANOR</name>
<evidence type="ECO:0000255" key="1">
    <source>
        <dbReference type="HAMAP-Rule" id="MF_00689"/>
    </source>
</evidence>
<evidence type="ECO:0000305" key="2"/>
<gene>
    <name evidence="1" type="primary">bpt</name>
    <name type="ordered locus">XOO1611</name>
</gene>
<dbReference type="EC" id="2.3.2.29" evidence="1"/>
<dbReference type="EMBL" id="AE013598">
    <property type="protein sequence ID" value="AAW74865.1"/>
    <property type="status" value="ALT_INIT"/>
    <property type="molecule type" value="Genomic_DNA"/>
</dbReference>
<dbReference type="SMR" id="Q5H2F6"/>
<dbReference type="STRING" id="291331.XOO1611"/>
<dbReference type="KEGG" id="xoo:XOO1611"/>
<dbReference type="HOGENOM" id="CLU_077607_0_0_6"/>
<dbReference type="Proteomes" id="UP000006735">
    <property type="component" value="Chromosome"/>
</dbReference>
<dbReference type="GO" id="GO:0005737">
    <property type="term" value="C:cytoplasm"/>
    <property type="evidence" value="ECO:0007669"/>
    <property type="project" value="UniProtKB-SubCell"/>
</dbReference>
<dbReference type="GO" id="GO:0004057">
    <property type="term" value="F:arginyl-tRNA--protein transferase activity"/>
    <property type="evidence" value="ECO:0007669"/>
    <property type="project" value="InterPro"/>
</dbReference>
<dbReference type="GO" id="GO:0008914">
    <property type="term" value="F:leucyl-tRNA--protein transferase activity"/>
    <property type="evidence" value="ECO:0007669"/>
    <property type="project" value="UniProtKB-UniRule"/>
</dbReference>
<dbReference type="GO" id="GO:0071596">
    <property type="term" value="P:ubiquitin-dependent protein catabolic process via the N-end rule pathway"/>
    <property type="evidence" value="ECO:0007669"/>
    <property type="project" value="InterPro"/>
</dbReference>
<dbReference type="HAMAP" id="MF_00689">
    <property type="entry name" value="Bpt"/>
    <property type="match status" value="1"/>
</dbReference>
<dbReference type="InterPro" id="IPR016181">
    <property type="entry name" value="Acyl_CoA_acyltransferase"/>
</dbReference>
<dbReference type="InterPro" id="IPR017138">
    <property type="entry name" value="Asp_Glu_LeuTrfase"/>
</dbReference>
<dbReference type="InterPro" id="IPR030700">
    <property type="entry name" value="N-end_Aminoacyl_Trfase"/>
</dbReference>
<dbReference type="InterPro" id="IPR007472">
    <property type="entry name" value="N-end_Aminoacyl_Trfase_C"/>
</dbReference>
<dbReference type="InterPro" id="IPR007471">
    <property type="entry name" value="N-end_Aminoacyl_Trfase_N"/>
</dbReference>
<dbReference type="NCBIfam" id="NF002341">
    <property type="entry name" value="PRK01305.1-1"/>
    <property type="match status" value="1"/>
</dbReference>
<dbReference type="NCBIfam" id="NF002342">
    <property type="entry name" value="PRK01305.1-3"/>
    <property type="match status" value="1"/>
</dbReference>
<dbReference type="NCBIfam" id="NF002346">
    <property type="entry name" value="PRK01305.2-3"/>
    <property type="match status" value="1"/>
</dbReference>
<dbReference type="PANTHER" id="PTHR21367">
    <property type="entry name" value="ARGININE-TRNA-PROTEIN TRANSFERASE 1"/>
    <property type="match status" value="1"/>
</dbReference>
<dbReference type="PANTHER" id="PTHR21367:SF1">
    <property type="entry name" value="ARGINYL-TRNA--PROTEIN TRANSFERASE 1"/>
    <property type="match status" value="1"/>
</dbReference>
<dbReference type="Pfam" id="PF04377">
    <property type="entry name" value="ATE_C"/>
    <property type="match status" value="1"/>
</dbReference>
<dbReference type="Pfam" id="PF04376">
    <property type="entry name" value="ATE_N"/>
    <property type="match status" value="1"/>
</dbReference>
<dbReference type="PIRSF" id="PIRSF037208">
    <property type="entry name" value="ATE_pro_prd"/>
    <property type="match status" value="1"/>
</dbReference>
<dbReference type="SUPFAM" id="SSF55729">
    <property type="entry name" value="Acyl-CoA N-acyltransferases (Nat)"/>
    <property type="match status" value="1"/>
</dbReference>
<protein>
    <recommendedName>
        <fullName evidence="1">Aspartate/glutamate leucyltransferase</fullName>
        <ecNumber evidence="1">2.3.2.29</ecNumber>
    </recommendedName>
</protein>
<sequence length="251" mass="28801">MAIHADTHDDLRLFQTGEHACGYWSDRRARDLVLDPHDPRLGAIYPQALAWGFRRSGDLVYRPHCERCRACVPVRIAVDAFHPDRSQRRCLTRNQDLVVRVVAAERTDEQLALYRQYLKYRHPGGGMDEHGATEFDQFLIGGWSHGRFLEIREPAIAHLPGRLLAVAVTDVTEHALSAIYTFYAPEAAARSLGTFAILQQIQWAQRERRAHVYLGYWIEGHAKMNYKRRFSALEAYDGRHWCDLPAHPSGT</sequence>